<name>ATPD_ANADF</name>
<feature type="chain" id="PRO_0000370880" description="ATP synthase subunit delta">
    <location>
        <begin position="1"/>
        <end position="179"/>
    </location>
</feature>
<organism>
    <name type="scientific">Anaeromyxobacter sp. (strain Fw109-5)</name>
    <dbReference type="NCBI Taxonomy" id="404589"/>
    <lineage>
        <taxon>Bacteria</taxon>
        <taxon>Pseudomonadati</taxon>
        <taxon>Myxococcota</taxon>
        <taxon>Myxococcia</taxon>
        <taxon>Myxococcales</taxon>
        <taxon>Cystobacterineae</taxon>
        <taxon>Anaeromyxobacteraceae</taxon>
        <taxon>Anaeromyxobacter</taxon>
    </lineage>
</organism>
<sequence length="179" mass="19536">MIMGSIARRYAKALFSLAVEKGRVEPWSESLQSLKEGVEGSPDLREVLSNPVYSREQRRAIVEKLAAALRLESEPANLLFLLGDRNRLGYLGAIVDTFRALADEHLGRVRAKVTSAVPLDGSAAQAIADRLSQATQATVLLDREVDPALLGGVVAQVGSLVYDGSLRTQLEDLRRQLKQ</sequence>
<proteinExistence type="inferred from homology"/>
<gene>
    <name evidence="1" type="primary">atpH</name>
    <name type="ordered locus">Anae109_4498</name>
</gene>
<reference key="1">
    <citation type="journal article" date="2015" name="Genome Announc.">
        <title>Complete genome sequence of Anaeromyxobacter sp. Fw109-5, an anaerobic, metal-reducing bacterium isolated from a contaminated subsurface environment.</title>
        <authorList>
            <person name="Hwang C."/>
            <person name="Copeland A."/>
            <person name="Lucas S."/>
            <person name="Lapidus A."/>
            <person name="Barry K."/>
            <person name="Glavina Del Rio T."/>
            <person name="Dalin E."/>
            <person name="Tice H."/>
            <person name="Pitluck S."/>
            <person name="Sims D."/>
            <person name="Brettin T."/>
            <person name="Bruce D.C."/>
            <person name="Detter J.C."/>
            <person name="Han C.S."/>
            <person name="Schmutz J."/>
            <person name="Larimer F.W."/>
            <person name="Land M.L."/>
            <person name="Hauser L.J."/>
            <person name="Kyrpides N."/>
            <person name="Lykidis A."/>
            <person name="Richardson P."/>
            <person name="Belieav A."/>
            <person name="Sanford R.A."/>
            <person name="Loeffler F.E."/>
            <person name="Fields M.W."/>
        </authorList>
    </citation>
    <scope>NUCLEOTIDE SEQUENCE [LARGE SCALE GENOMIC DNA]</scope>
    <source>
        <strain>Fw109-5</strain>
    </source>
</reference>
<keyword id="KW-0066">ATP synthesis</keyword>
<keyword id="KW-0997">Cell inner membrane</keyword>
<keyword id="KW-1003">Cell membrane</keyword>
<keyword id="KW-0139">CF(1)</keyword>
<keyword id="KW-0375">Hydrogen ion transport</keyword>
<keyword id="KW-0406">Ion transport</keyword>
<keyword id="KW-0472">Membrane</keyword>
<keyword id="KW-1185">Reference proteome</keyword>
<keyword id="KW-0813">Transport</keyword>
<protein>
    <recommendedName>
        <fullName evidence="1">ATP synthase subunit delta</fullName>
    </recommendedName>
    <alternativeName>
        <fullName evidence="1">ATP synthase F(1) sector subunit delta</fullName>
    </alternativeName>
    <alternativeName>
        <fullName evidence="1">F-type ATPase subunit delta</fullName>
        <shortName evidence="1">F-ATPase subunit delta</shortName>
    </alternativeName>
</protein>
<dbReference type="EMBL" id="CP000769">
    <property type="protein sequence ID" value="ABS28676.1"/>
    <property type="molecule type" value="Genomic_DNA"/>
</dbReference>
<dbReference type="RefSeq" id="WP_012099326.1">
    <property type="nucleotide sequence ID" value="NC_009675.1"/>
</dbReference>
<dbReference type="SMR" id="A7HIY0"/>
<dbReference type="STRING" id="404589.Anae109_4498"/>
<dbReference type="KEGG" id="afw:Anae109_4498"/>
<dbReference type="eggNOG" id="COG0712">
    <property type="taxonomic scope" value="Bacteria"/>
</dbReference>
<dbReference type="HOGENOM" id="CLU_085114_1_1_7"/>
<dbReference type="OrthoDB" id="9802471at2"/>
<dbReference type="Proteomes" id="UP000006382">
    <property type="component" value="Chromosome"/>
</dbReference>
<dbReference type="GO" id="GO:0005886">
    <property type="term" value="C:plasma membrane"/>
    <property type="evidence" value="ECO:0007669"/>
    <property type="project" value="UniProtKB-SubCell"/>
</dbReference>
<dbReference type="GO" id="GO:0045259">
    <property type="term" value="C:proton-transporting ATP synthase complex"/>
    <property type="evidence" value="ECO:0007669"/>
    <property type="project" value="UniProtKB-KW"/>
</dbReference>
<dbReference type="GO" id="GO:0046933">
    <property type="term" value="F:proton-transporting ATP synthase activity, rotational mechanism"/>
    <property type="evidence" value="ECO:0007669"/>
    <property type="project" value="UniProtKB-UniRule"/>
</dbReference>
<dbReference type="Gene3D" id="1.10.520.20">
    <property type="entry name" value="N-terminal domain of the delta subunit of the F1F0-ATP synthase"/>
    <property type="match status" value="1"/>
</dbReference>
<dbReference type="HAMAP" id="MF_01416">
    <property type="entry name" value="ATP_synth_delta_bact"/>
    <property type="match status" value="1"/>
</dbReference>
<dbReference type="InterPro" id="IPR026015">
    <property type="entry name" value="ATP_synth_OSCP/delta_N_sf"/>
</dbReference>
<dbReference type="InterPro" id="IPR000711">
    <property type="entry name" value="ATPase_OSCP/dsu"/>
</dbReference>
<dbReference type="NCBIfam" id="TIGR01145">
    <property type="entry name" value="ATP_synt_delta"/>
    <property type="match status" value="1"/>
</dbReference>
<dbReference type="NCBIfam" id="NF004402">
    <property type="entry name" value="PRK05758.2-2"/>
    <property type="match status" value="1"/>
</dbReference>
<dbReference type="PANTHER" id="PTHR11910">
    <property type="entry name" value="ATP SYNTHASE DELTA CHAIN"/>
    <property type="match status" value="1"/>
</dbReference>
<dbReference type="Pfam" id="PF00213">
    <property type="entry name" value="OSCP"/>
    <property type="match status" value="1"/>
</dbReference>
<dbReference type="PRINTS" id="PR00125">
    <property type="entry name" value="ATPASEDELTA"/>
</dbReference>
<dbReference type="SUPFAM" id="SSF47928">
    <property type="entry name" value="N-terminal domain of the delta subunit of the F1F0-ATP synthase"/>
    <property type="match status" value="1"/>
</dbReference>
<comment type="function">
    <text evidence="1">F(1)F(0) ATP synthase produces ATP from ADP in the presence of a proton or sodium gradient. F-type ATPases consist of two structural domains, F(1) containing the extramembraneous catalytic core and F(0) containing the membrane proton channel, linked together by a central stalk and a peripheral stalk. During catalysis, ATP synthesis in the catalytic domain of F(1) is coupled via a rotary mechanism of the central stalk subunits to proton translocation.</text>
</comment>
<comment type="function">
    <text evidence="1">This protein is part of the stalk that links CF(0) to CF(1). It either transmits conformational changes from CF(0) to CF(1) or is implicated in proton conduction.</text>
</comment>
<comment type="subunit">
    <text evidence="1">F-type ATPases have 2 components, F(1) - the catalytic core - and F(0) - the membrane proton channel. F(1) has five subunits: alpha(3), beta(3), gamma(1), delta(1), epsilon(1). F(0) has three main subunits: a(1), b(2) and c(10-14). The alpha and beta chains form an alternating ring which encloses part of the gamma chain. F(1) is attached to F(0) by a central stalk formed by the gamma and epsilon chains, while a peripheral stalk is formed by the delta and b chains.</text>
</comment>
<comment type="subcellular location">
    <subcellularLocation>
        <location evidence="1">Cell inner membrane</location>
        <topology evidence="1">Peripheral membrane protein</topology>
    </subcellularLocation>
</comment>
<comment type="similarity">
    <text evidence="1">Belongs to the ATPase delta chain family.</text>
</comment>
<evidence type="ECO:0000255" key="1">
    <source>
        <dbReference type="HAMAP-Rule" id="MF_01416"/>
    </source>
</evidence>
<accession>A7HIY0</accession>